<name>NUOB_ACIB3</name>
<organism>
    <name type="scientific">Acinetobacter baumannii (strain AB307-0294)</name>
    <dbReference type="NCBI Taxonomy" id="557600"/>
    <lineage>
        <taxon>Bacteria</taxon>
        <taxon>Pseudomonadati</taxon>
        <taxon>Pseudomonadota</taxon>
        <taxon>Gammaproteobacteria</taxon>
        <taxon>Moraxellales</taxon>
        <taxon>Moraxellaceae</taxon>
        <taxon>Acinetobacter</taxon>
        <taxon>Acinetobacter calcoaceticus/baumannii complex</taxon>
    </lineage>
</organism>
<proteinExistence type="inferred from homology"/>
<feature type="chain" id="PRO_0000376105" description="NADH-quinone oxidoreductase subunit B">
    <location>
        <begin position="1"/>
        <end position="225"/>
    </location>
</feature>
<feature type="binding site" evidence="1">
    <location>
        <position position="65"/>
    </location>
    <ligand>
        <name>[4Fe-4S] cluster</name>
        <dbReference type="ChEBI" id="CHEBI:49883"/>
    </ligand>
</feature>
<feature type="binding site" evidence="1">
    <location>
        <position position="66"/>
    </location>
    <ligand>
        <name>[4Fe-4S] cluster</name>
        <dbReference type="ChEBI" id="CHEBI:49883"/>
    </ligand>
</feature>
<feature type="binding site" evidence="1">
    <location>
        <position position="131"/>
    </location>
    <ligand>
        <name>[4Fe-4S] cluster</name>
        <dbReference type="ChEBI" id="CHEBI:49883"/>
    </ligand>
</feature>
<feature type="binding site" evidence="1">
    <location>
        <position position="160"/>
    </location>
    <ligand>
        <name>[4Fe-4S] cluster</name>
        <dbReference type="ChEBI" id="CHEBI:49883"/>
    </ligand>
</feature>
<dbReference type="EC" id="7.1.1.-" evidence="1"/>
<dbReference type="EMBL" id="CP001172">
    <property type="protein sequence ID" value="ACJ58218.1"/>
    <property type="molecule type" value="Genomic_DNA"/>
</dbReference>
<dbReference type="RefSeq" id="WP_000878003.1">
    <property type="nucleotide sequence ID" value="NZ_CP001172.1"/>
</dbReference>
<dbReference type="SMR" id="B7GZC0"/>
<dbReference type="HOGENOM" id="CLU_055737_7_3_6"/>
<dbReference type="Proteomes" id="UP000006924">
    <property type="component" value="Chromosome"/>
</dbReference>
<dbReference type="GO" id="GO:0005886">
    <property type="term" value="C:plasma membrane"/>
    <property type="evidence" value="ECO:0007669"/>
    <property type="project" value="UniProtKB-SubCell"/>
</dbReference>
<dbReference type="GO" id="GO:0045271">
    <property type="term" value="C:respiratory chain complex I"/>
    <property type="evidence" value="ECO:0007669"/>
    <property type="project" value="TreeGrafter"/>
</dbReference>
<dbReference type="GO" id="GO:0051539">
    <property type="term" value="F:4 iron, 4 sulfur cluster binding"/>
    <property type="evidence" value="ECO:0007669"/>
    <property type="project" value="UniProtKB-KW"/>
</dbReference>
<dbReference type="GO" id="GO:0005506">
    <property type="term" value="F:iron ion binding"/>
    <property type="evidence" value="ECO:0007669"/>
    <property type="project" value="UniProtKB-UniRule"/>
</dbReference>
<dbReference type="GO" id="GO:0008137">
    <property type="term" value="F:NADH dehydrogenase (ubiquinone) activity"/>
    <property type="evidence" value="ECO:0007669"/>
    <property type="project" value="InterPro"/>
</dbReference>
<dbReference type="GO" id="GO:0050136">
    <property type="term" value="F:NADH:ubiquinone reductase (non-electrogenic) activity"/>
    <property type="evidence" value="ECO:0007669"/>
    <property type="project" value="UniProtKB-UniRule"/>
</dbReference>
<dbReference type="GO" id="GO:0048038">
    <property type="term" value="F:quinone binding"/>
    <property type="evidence" value="ECO:0007669"/>
    <property type="project" value="UniProtKB-KW"/>
</dbReference>
<dbReference type="GO" id="GO:0009060">
    <property type="term" value="P:aerobic respiration"/>
    <property type="evidence" value="ECO:0007669"/>
    <property type="project" value="TreeGrafter"/>
</dbReference>
<dbReference type="GO" id="GO:0015990">
    <property type="term" value="P:electron transport coupled proton transport"/>
    <property type="evidence" value="ECO:0007669"/>
    <property type="project" value="TreeGrafter"/>
</dbReference>
<dbReference type="FunFam" id="3.40.50.12280:FF:000002">
    <property type="entry name" value="NADH-quinone oxidoreductase subunit B"/>
    <property type="match status" value="1"/>
</dbReference>
<dbReference type="Gene3D" id="3.40.50.12280">
    <property type="match status" value="1"/>
</dbReference>
<dbReference type="HAMAP" id="MF_01356">
    <property type="entry name" value="NDH1_NuoB"/>
    <property type="match status" value="1"/>
</dbReference>
<dbReference type="InterPro" id="IPR006137">
    <property type="entry name" value="NADH_UbQ_OxRdtase-like_20kDa"/>
</dbReference>
<dbReference type="InterPro" id="IPR006138">
    <property type="entry name" value="NADH_UQ_OxRdtase_20Kd_su"/>
</dbReference>
<dbReference type="NCBIfam" id="TIGR01957">
    <property type="entry name" value="nuoB_fam"/>
    <property type="match status" value="1"/>
</dbReference>
<dbReference type="NCBIfam" id="NF005012">
    <property type="entry name" value="PRK06411.1"/>
    <property type="match status" value="1"/>
</dbReference>
<dbReference type="PANTHER" id="PTHR11995">
    <property type="entry name" value="NADH DEHYDROGENASE"/>
    <property type="match status" value="1"/>
</dbReference>
<dbReference type="PANTHER" id="PTHR11995:SF14">
    <property type="entry name" value="NADH DEHYDROGENASE [UBIQUINONE] IRON-SULFUR PROTEIN 7, MITOCHONDRIAL"/>
    <property type="match status" value="1"/>
</dbReference>
<dbReference type="Pfam" id="PF01058">
    <property type="entry name" value="Oxidored_q6"/>
    <property type="match status" value="1"/>
</dbReference>
<dbReference type="SUPFAM" id="SSF56770">
    <property type="entry name" value="HydA/Nqo6-like"/>
    <property type="match status" value="1"/>
</dbReference>
<dbReference type="PROSITE" id="PS01150">
    <property type="entry name" value="COMPLEX1_20K"/>
    <property type="match status" value="1"/>
</dbReference>
<accession>B7GZC0</accession>
<comment type="function">
    <text evidence="1">NDH-1 shuttles electrons from NADH, via FMN and iron-sulfur (Fe-S) centers, to quinones in the respiratory chain. The immediate electron acceptor for the enzyme in this species is believed to be ubiquinone. Couples the redox reaction to proton translocation (for every two electrons transferred, four hydrogen ions are translocated across the cytoplasmic membrane), and thus conserves the redox energy in a proton gradient.</text>
</comment>
<comment type="catalytic activity">
    <reaction evidence="1">
        <text>a quinone + NADH + 5 H(+)(in) = a quinol + NAD(+) + 4 H(+)(out)</text>
        <dbReference type="Rhea" id="RHEA:57888"/>
        <dbReference type="ChEBI" id="CHEBI:15378"/>
        <dbReference type="ChEBI" id="CHEBI:24646"/>
        <dbReference type="ChEBI" id="CHEBI:57540"/>
        <dbReference type="ChEBI" id="CHEBI:57945"/>
        <dbReference type="ChEBI" id="CHEBI:132124"/>
    </reaction>
</comment>
<comment type="cofactor">
    <cofactor evidence="1">
        <name>[4Fe-4S] cluster</name>
        <dbReference type="ChEBI" id="CHEBI:49883"/>
    </cofactor>
    <text evidence="1">Binds 1 [4Fe-4S] cluster.</text>
</comment>
<comment type="subunit">
    <text evidence="1">NDH-1 is composed of 14 different subunits. Subunits NuoB, C, D, E, F, and G constitute the peripheral sector of the complex.</text>
</comment>
<comment type="subcellular location">
    <subcellularLocation>
        <location evidence="1">Cell inner membrane</location>
        <topology evidence="1">Peripheral membrane protein</topology>
        <orientation evidence="1">Cytoplasmic side</orientation>
    </subcellularLocation>
</comment>
<comment type="similarity">
    <text evidence="1">Belongs to the complex I 20 kDa subunit family.</text>
</comment>
<evidence type="ECO:0000255" key="1">
    <source>
        <dbReference type="HAMAP-Rule" id="MF_01356"/>
    </source>
</evidence>
<gene>
    <name evidence="1" type="primary">nuoB</name>
    <name type="ordered locus">ABBFA_002861</name>
</gene>
<sequence>MKYTLTRANPDADQYPLQDRQIVTDPLEEEVNKNVFMTRLEDVLHTAVNWGRKNSLWPFNFGTSCCYVEYATTLTGVHDLSRFGAEVIRASPRQADLMIVAGTCFVKMAPVIQRLYEQMLEPKWVISMGACANSGGMYDIYSVVQGVDKIIPVDVYVPGCPPRPEALIQALMLLQDQIQLERRPLSAVIGDDLQPVYKPKMMPERDRKNAQRIAVKNLRSMDEIK</sequence>
<keyword id="KW-0004">4Fe-4S</keyword>
<keyword id="KW-0997">Cell inner membrane</keyword>
<keyword id="KW-1003">Cell membrane</keyword>
<keyword id="KW-0408">Iron</keyword>
<keyword id="KW-0411">Iron-sulfur</keyword>
<keyword id="KW-0472">Membrane</keyword>
<keyword id="KW-0479">Metal-binding</keyword>
<keyword id="KW-0520">NAD</keyword>
<keyword id="KW-0874">Quinone</keyword>
<keyword id="KW-1278">Translocase</keyword>
<keyword id="KW-0813">Transport</keyword>
<keyword id="KW-0830">Ubiquinone</keyword>
<reference key="1">
    <citation type="journal article" date="2008" name="J. Bacteriol.">
        <title>Comparative genome sequence analysis of multidrug-resistant Acinetobacter baumannii.</title>
        <authorList>
            <person name="Adams M.D."/>
            <person name="Goglin K."/>
            <person name="Molyneaux N."/>
            <person name="Hujer K.M."/>
            <person name="Lavender H."/>
            <person name="Jamison J.J."/>
            <person name="MacDonald I.J."/>
            <person name="Martin K.M."/>
            <person name="Russo T."/>
            <person name="Campagnari A.A."/>
            <person name="Hujer A.M."/>
            <person name="Bonomo R.A."/>
            <person name="Gill S.R."/>
        </authorList>
    </citation>
    <scope>NUCLEOTIDE SEQUENCE [LARGE SCALE GENOMIC DNA]</scope>
    <source>
        <strain>AB307-0294</strain>
    </source>
</reference>
<protein>
    <recommendedName>
        <fullName evidence="1">NADH-quinone oxidoreductase subunit B</fullName>
        <ecNumber evidence="1">7.1.1.-</ecNumber>
    </recommendedName>
    <alternativeName>
        <fullName evidence="1">NADH dehydrogenase I subunit B</fullName>
    </alternativeName>
    <alternativeName>
        <fullName evidence="1">NDH-1 subunit B</fullName>
    </alternativeName>
</protein>